<evidence type="ECO:0000255" key="1"/>
<evidence type="ECO:0000305" key="2"/>
<feature type="chain" id="PRO_0000213284" description="Protein SprT">
    <location>
        <begin position="1"/>
        <end position="170"/>
    </location>
</feature>
<feature type="domain" description="SprT-like">
    <location>
        <begin position="22"/>
        <end position="165"/>
    </location>
</feature>
<feature type="active site" evidence="1">
    <location>
        <position position="79"/>
    </location>
</feature>
<feature type="binding site" evidence="1">
    <location>
        <position position="78"/>
    </location>
    <ligand>
        <name>Zn(2+)</name>
        <dbReference type="ChEBI" id="CHEBI:29105"/>
    </ligand>
</feature>
<feature type="binding site" evidence="1">
    <location>
        <position position="82"/>
    </location>
    <ligand>
        <name>Zn(2+)</name>
        <dbReference type="ChEBI" id="CHEBI:29105"/>
    </ligand>
</feature>
<feature type="sequence conflict" description="In Ref. 2 and 3." evidence="2" ref="2 3">
    <original>S</original>
    <variation>A</variation>
    <location>
        <position position="137"/>
    </location>
</feature>
<sequence length="170" mass="19923">MSTLRIPIALQQAVMQCLRHYLQLANQHLGTAYPEPKVNYHQRGTNAGSAYLQSFEIRLNPVLLLENKQPFIDEVVPHELAHLLVYRQFGRVAPHGKEWRWMMEQVLKVPASRTHQFEVASVRSKTFNYQCKCQQHSLTIRRHNKVLRGESEYRCRQCGEKLQFITINPD</sequence>
<comment type="cofactor">
    <cofactor evidence="2">
        <name>Zn(2+)</name>
        <dbReference type="ChEBI" id="CHEBI:29105"/>
    </cofactor>
    <text evidence="2">Binds 1 zinc ion.</text>
</comment>
<comment type="subcellular location">
    <subcellularLocation>
        <location evidence="2">Cytoplasm</location>
    </subcellularLocation>
</comment>
<comment type="similarity">
    <text evidence="2">Belongs to the SprT family.</text>
</comment>
<comment type="sequence caution" evidence="2">
    <conflict type="erroneous initiation">
        <sequence resource="EMBL-CDS" id="AAM86865"/>
    </conflict>
</comment>
<comment type="sequence caution" evidence="2">
    <conflict type="erroneous initiation">
        <sequence resource="EMBL-CDS" id="AAS63665"/>
    </conflict>
</comment>
<proteinExistence type="inferred from homology"/>
<gene>
    <name type="primary">sprT</name>
    <name type="ordered locus">YPO0932</name>
    <name type="ordered locus">y3315</name>
    <name type="ordered locus">YP_3511</name>
</gene>
<keyword id="KW-0963">Cytoplasm</keyword>
<keyword id="KW-0479">Metal-binding</keyword>
<keyword id="KW-1185">Reference proteome</keyword>
<keyword id="KW-0862">Zinc</keyword>
<reference key="1">
    <citation type="journal article" date="2001" name="Nature">
        <title>Genome sequence of Yersinia pestis, the causative agent of plague.</title>
        <authorList>
            <person name="Parkhill J."/>
            <person name="Wren B.W."/>
            <person name="Thomson N.R."/>
            <person name="Titball R.W."/>
            <person name="Holden M.T.G."/>
            <person name="Prentice M.B."/>
            <person name="Sebaihia M."/>
            <person name="James K.D."/>
            <person name="Churcher C.M."/>
            <person name="Mungall K.L."/>
            <person name="Baker S."/>
            <person name="Basham D."/>
            <person name="Bentley S.D."/>
            <person name="Brooks K."/>
            <person name="Cerdeno-Tarraga A.-M."/>
            <person name="Chillingworth T."/>
            <person name="Cronin A."/>
            <person name="Davies R.M."/>
            <person name="Davis P."/>
            <person name="Dougan G."/>
            <person name="Feltwell T."/>
            <person name="Hamlin N."/>
            <person name="Holroyd S."/>
            <person name="Jagels K."/>
            <person name="Karlyshev A.V."/>
            <person name="Leather S."/>
            <person name="Moule S."/>
            <person name="Oyston P.C.F."/>
            <person name="Quail M.A."/>
            <person name="Rutherford K.M."/>
            <person name="Simmonds M."/>
            <person name="Skelton J."/>
            <person name="Stevens K."/>
            <person name="Whitehead S."/>
            <person name="Barrell B.G."/>
        </authorList>
    </citation>
    <scope>NUCLEOTIDE SEQUENCE [LARGE SCALE GENOMIC DNA]</scope>
    <source>
        <strain>CO-92 / Biovar Orientalis</strain>
    </source>
</reference>
<reference key="2">
    <citation type="journal article" date="2002" name="J. Bacteriol.">
        <title>Genome sequence of Yersinia pestis KIM.</title>
        <authorList>
            <person name="Deng W."/>
            <person name="Burland V."/>
            <person name="Plunkett G. III"/>
            <person name="Boutin A."/>
            <person name="Mayhew G.F."/>
            <person name="Liss P."/>
            <person name="Perna N.T."/>
            <person name="Rose D.J."/>
            <person name="Mau B."/>
            <person name="Zhou S."/>
            <person name="Schwartz D.C."/>
            <person name="Fetherston J.D."/>
            <person name="Lindler L.E."/>
            <person name="Brubaker R.R."/>
            <person name="Plano G.V."/>
            <person name="Straley S.C."/>
            <person name="McDonough K.A."/>
            <person name="Nilles M.L."/>
            <person name="Matson J.S."/>
            <person name="Blattner F.R."/>
            <person name="Perry R.D."/>
        </authorList>
    </citation>
    <scope>NUCLEOTIDE SEQUENCE [LARGE SCALE GENOMIC DNA]</scope>
    <source>
        <strain>KIM10+ / Biovar Mediaevalis</strain>
    </source>
</reference>
<reference key="3">
    <citation type="journal article" date="2004" name="DNA Res.">
        <title>Complete genome sequence of Yersinia pestis strain 91001, an isolate avirulent to humans.</title>
        <authorList>
            <person name="Song Y."/>
            <person name="Tong Z."/>
            <person name="Wang J."/>
            <person name="Wang L."/>
            <person name="Guo Z."/>
            <person name="Han Y."/>
            <person name="Zhang J."/>
            <person name="Pei D."/>
            <person name="Zhou D."/>
            <person name="Qin H."/>
            <person name="Pang X."/>
            <person name="Han Y."/>
            <person name="Zhai J."/>
            <person name="Li M."/>
            <person name="Cui B."/>
            <person name="Qi Z."/>
            <person name="Jin L."/>
            <person name="Dai R."/>
            <person name="Chen F."/>
            <person name="Li S."/>
            <person name="Ye C."/>
            <person name="Du Z."/>
            <person name="Lin W."/>
            <person name="Wang J."/>
            <person name="Yu J."/>
            <person name="Yang H."/>
            <person name="Wang J."/>
            <person name="Huang P."/>
            <person name="Yang R."/>
        </authorList>
    </citation>
    <scope>NUCLEOTIDE SEQUENCE [LARGE SCALE GENOMIC DNA]</scope>
    <source>
        <strain>91001 / Biovar Mediaevalis</strain>
    </source>
</reference>
<accession>Q8ZHG6</accession>
<accession>Q0WIA9</accession>
<accession>Q8CZV7</accession>
<dbReference type="EMBL" id="AL590842">
    <property type="protein sequence ID" value="CAL19598.1"/>
    <property type="molecule type" value="Genomic_DNA"/>
</dbReference>
<dbReference type="EMBL" id="AE009952">
    <property type="protein sequence ID" value="AAM86865.1"/>
    <property type="status" value="ALT_INIT"/>
    <property type="molecule type" value="Genomic_DNA"/>
</dbReference>
<dbReference type="EMBL" id="AE017042">
    <property type="protein sequence ID" value="AAS63665.1"/>
    <property type="status" value="ALT_INIT"/>
    <property type="molecule type" value="Genomic_DNA"/>
</dbReference>
<dbReference type="PIR" id="AD0114">
    <property type="entry name" value="AD0114"/>
</dbReference>
<dbReference type="RefSeq" id="WP_002228059.1">
    <property type="nucleotide sequence ID" value="NZ_VEZU01000023.1"/>
</dbReference>
<dbReference type="RefSeq" id="YP_002345979.1">
    <property type="nucleotide sequence ID" value="NC_003143.1"/>
</dbReference>
<dbReference type="SMR" id="Q8ZHG6"/>
<dbReference type="STRING" id="214092.YPO0932"/>
<dbReference type="PaxDb" id="214092-YPO0932"/>
<dbReference type="DNASU" id="1148262"/>
<dbReference type="EnsemblBacteria" id="AAS63665">
    <property type="protein sequence ID" value="AAS63665"/>
    <property type="gene ID" value="YP_3511"/>
</dbReference>
<dbReference type="KEGG" id="ype:YPO0932"/>
<dbReference type="KEGG" id="ypk:y3315"/>
<dbReference type="KEGG" id="ypm:YP_3511"/>
<dbReference type="PATRIC" id="fig|214092.21.peg.1209"/>
<dbReference type="eggNOG" id="COG3091">
    <property type="taxonomic scope" value="Bacteria"/>
</dbReference>
<dbReference type="HOGENOM" id="CLU_113336_0_1_6"/>
<dbReference type="OrthoDB" id="267364at2"/>
<dbReference type="Proteomes" id="UP000000815">
    <property type="component" value="Chromosome"/>
</dbReference>
<dbReference type="Proteomes" id="UP000001019">
    <property type="component" value="Chromosome"/>
</dbReference>
<dbReference type="Proteomes" id="UP000002490">
    <property type="component" value="Chromosome"/>
</dbReference>
<dbReference type="GO" id="GO:0005737">
    <property type="term" value="C:cytoplasm"/>
    <property type="evidence" value="ECO:0007669"/>
    <property type="project" value="UniProtKB-SubCell"/>
</dbReference>
<dbReference type="GO" id="GO:0008270">
    <property type="term" value="F:zinc ion binding"/>
    <property type="evidence" value="ECO:0007669"/>
    <property type="project" value="UniProtKB-UniRule"/>
</dbReference>
<dbReference type="GO" id="GO:0006950">
    <property type="term" value="P:response to stress"/>
    <property type="evidence" value="ECO:0007669"/>
    <property type="project" value="UniProtKB-ARBA"/>
</dbReference>
<dbReference type="Gene3D" id="3.30.2010.10">
    <property type="entry name" value="Metalloproteases ('zincins'), catalytic domain"/>
    <property type="match status" value="1"/>
</dbReference>
<dbReference type="HAMAP" id="MF_00746">
    <property type="entry name" value="SprT"/>
    <property type="match status" value="1"/>
</dbReference>
<dbReference type="InterPro" id="IPR006640">
    <property type="entry name" value="SprT-like_domain"/>
</dbReference>
<dbReference type="InterPro" id="IPR035240">
    <property type="entry name" value="SprT_Zn_ribbon"/>
</dbReference>
<dbReference type="InterPro" id="IPR023483">
    <property type="entry name" value="Uncharacterised_SprT"/>
</dbReference>
<dbReference type="NCBIfam" id="NF003421">
    <property type="entry name" value="PRK04860.1"/>
    <property type="match status" value="1"/>
</dbReference>
<dbReference type="PANTHER" id="PTHR38773">
    <property type="entry name" value="PROTEIN SPRT"/>
    <property type="match status" value="1"/>
</dbReference>
<dbReference type="PANTHER" id="PTHR38773:SF1">
    <property type="entry name" value="PROTEIN SPRT"/>
    <property type="match status" value="1"/>
</dbReference>
<dbReference type="Pfam" id="PF10263">
    <property type="entry name" value="SprT-like"/>
    <property type="match status" value="1"/>
</dbReference>
<dbReference type="Pfam" id="PF17283">
    <property type="entry name" value="Zn_ribbon_SprT"/>
    <property type="match status" value="1"/>
</dbReference>
<dbReference type="SMART" id="SM00731">
    <property type="entry name" value="SprT"/>
    <property type="match status" value="1"/>
</dbReference>
<dbReference type="PROSITE" id="PS00142">
    <property type="entry name" value="ZINC_PROTEASE"/>
    <property type="match status" value="1"/>
</dbReference>
<protein>
    <recommendedName>
        <fullName>Protein SprT</fullName>
    </recommendedName>
</protein>
<organism>
    <name type="scientific">Yersinia pestis</name>
    <dbReference type="NCBI Taxonomy" id="632"/>
    <lineage>
        <taxon>Bacteria</taxon>
        <taxon>Pseudomonadati</taxon>
        <taxon>Pseudomonadota</taxon>
        <taxon>Gammaproteobacteria</taxon>
        <taxon>Enterobacterales</taxon>
        <taxon>Yersiniaceae</taxon>
        <taxon>Yersinia</taxon>
    </lineage>
</organism>
<name>SPRT_YERPE</name>